<proteinExistence type="evidence at protein level"/>
<evidence type="ECO:0000250" key="1">
    <source>
        <dbReference type="UniProtKB" id="P06169"/>
    </source>
</evidence>
<evidence type="ECO:0000269" key="2">
    <source>
    </source>
</evidence>
<evidence type="ECO:0000269" key="3">
    <source>
    </source>
</evidence>
<evidence type="ECO:0000269" key="4">
    <source>
    </source>
</evidence>
<evidence type="ECO:0000269" key="5">
    <source>
    </source>
</evidence>
<evidence type="ECO:0000269" key="6">
    <source>
    </source>
</evidence>
<evidence type="ECO:0000269" key="7">
    <source>
    </source>
</evidence>
<evidence type="ECO:0000269" key="8">
    <source>
    </source>
</evidence>
<evidence type="ECO:0000269" key="9">
    <source>
    </source>
</evidence>
<evidence type="ECO:0000269" key="10">
    <source>
    </source>
</evidence>
<evidence type="ECO:0000269" key="11">
    <source>
    </source>
</evidence>
<evidence type="ECO:0000269" key="12">
    <source>
    </source>
</evidence>
<evidence type="ECO:0000269" key="13">
    <source>
    </source>
</evidence>
<evidence type="ECO:0000269" key="14">
    <source>
    </source>
</evidence>
<evidence type="ECO:0000269" key="15">
    <source>
    </source>
</evidence>
<evidence type="ECO:0000269" key="16">
    <source>
    </source>
</evidence>
<evidence type="ECO:0000305" key="17"/>
<evidence type="ECO:0000305" key="18">
    <source>
    </source>
</evidence>
<accession>P16467</accession>
<accession>D6VYC9</accession>
<keyword id="KW-0021">Allosteric enzyme</keyword>
<keyword id="KW-0101">Branched-chain amino acid catabolism</keyword>
<keyword id="KW-0963">Cytoplasm</keyword>
<keyword id="KW-0210">Decarboxylase</keyword>
<keyword id="KW-0456">Lyase</keyword>
<keyword id="KW-0460">Magnesium</keyword>
<keyword id="KW-0479">Metal-binding</keyword>
<keyword id="KW-0539">Nucleus</keyword>
<keyword id="KW-0585">Phenylalanine catabolism</keyword>
<keyword id="KW-1185">Reference proteome</keyword>
<keyword id="KW-0786">Thiamine pyrophosphate</keyword>
<keyword id="KW-0823">Tryptophan catabolism</keyword>
<organism>
    <name type="scientific">Saccharomyces cerevisiae (strain ATCC 204508 / S288c)</name>
    <name type="common">Baker's yeast</name>
    <dbReference type="NCBI Taxonomy" id="559292"/>
    <lineage>
        <taxon>Eukaryota</taxon>
        <taxon>Fungi</taxon>
        <taxon>Dikarya</taxon>
        <taxon>Ascomycota</taxon>
        <taxon>Saccharomycotina</taxon>
        <taxon>Saccharomycetes</taxon>
        <taxon>Saccharomycetales</taxon>
        <taxon>Saccharomycetaceae</taxon>
        <taxon>Saccharomyces</taxon>
    </lineage>
</organism>
<protein>
    <recommendedName>
        <fullName>Pyruvate decarboxylase isozyme 2</fullName>
        <ecNumber evidence="11 13">4.1.1.-</ecNumber>
        <ecNumber evidence="7">4.1.1.43</ecNumber>
        <ecNumber evidence="5 16">4.1.1.72</ecNumber>
        <ecNumber evidence="7">4.1.1.74</ecNumber>
    </recommendedName>
    <alternativeName>
        <fullName>Thiamine pyrophosphate-dependent 2-oxo-acid decarboxylase</fullName>
        <shortName>2ODC</shortName>
    </alternativeName>
</protein>
<name>PDC5_YEAST</name>
<comment type="function">
    <text evidence="2 3 4 5 6 7 8 12 14 16">Second most abundant of three pyruvate decarboxylases (PDC1, PDC5, PDC6) implicated in the nonoxidative conversion of pyruvate to acetaldehyde and carbon dioxide during alcoholic fermentation. Most of the produced acetaldehyde is subsequently reduced to ethanol, but some is required for cytosolic acetyl-CoA production for biosynthetic pathways. The enzyme is also one of five 2-oxo acid decarboxylases (PDC1, PDC5, PDC6, ARO10, and THI3) able to decarboxylate more complex 2-oxo acids (alpha-keto-acids) than pyruvate, which seem mainly involved in amino acid catabolism. Here the enzyme catalyzes the decarboxylation of amino acids, which, in a first step, have been transaminated to the corresponding 2-oxo acids. In a third step, the resulting aldehydes are reduced to alcohols, collectively referred to as fusel oils or alcohols. Its preferred substrates are the transaminated amino acids derived from threonine (2-oxobutanoate), norvaline (2-oxopentanoate), valine (3-methyl-2-oxobutanoate, also alpha-keto-isovalerate), isoleucine ((3S)-3-methyl-2-oxopentanoate, also alpha-keto-beta-methylvalerate), phenylalanine (phenylpyruvate), and tryptophan (3-(indol-3-yl)pyruvate), whereas transaminated leucine is no substrate. In a side-reaction the carbanionic intermediate (or active aldehyde) generated by decarboxylation or by activation of an aldehyde can react with an aldehyde via condensation (or carboligation) yielding a 2-hydroxy ketone, collectively called acyloins.</text>
</comment>
<comment type="catalytic activity">
    <reaction evidence="11">
        <text>pyruvate + H(+) = acetaldehyde + CO2</text>
        <dbReference type="Rhea" id="RHEA:45484"/>
        <dbReference type="ChEBI" id="CHEBI:15343"/>
        <dbReference type="ChEBI" id="CHEBI:15361"/>
        <dbReference type="ChEBI" id="CHEBI:15378"/>
        <dbReference type="ChEBI" id="CHEBI:16526"/>
    </reaction>
</comment>
<comment type="catalytic activity">
    <reaction evidence="16">
        <text>3-methyl-2-oxobutanoate + H(+) = 2-methylpropanal + CO2</text>
        <dbReference type="Rhea" id="RHEA:54356"/>
        <dbReference type="ChEBI" id="CHEBI:11851"/>
        <dbReference type="ChEBI" id="CHEBI:15378"/>
        <dbReference type="ChEBI" id="CHEBI:16526"/>
        <dbReference type="ChEBI" id="CHEBI:48943"/>
        <dbReference type="EC" id="4.1.1.72"/>
    </reaction>
</comment>
<comment type="catalytic activity">
    <reaction evidence="5">
        <text>(S)-3-methyl-2-oxopentanoate + H(+) = 2-methylbutanal + CO2</text>
        <dbReference type="Rhea" id="RHEA:21108"/>
        <dbReference type="ChEBI" id="CHEBI:15378"/>
        <dbReference type="ChEBI" id="CHEBI:16182"/>
        <dbReference type="ChEBI" id="CHEBI:16526"/>
        <dbReference type="ChEBI" id="CHEBI:35146"/>
        <dbReference type="EC" id="4.1.1.72"/>
    </reaction>
</comment>
<comment type="catalytic activity">
    <reaction evidence="7">
        <text>indole-3-pyruvate + H(+) = indole-3-acetaldehyde + CO2</text>
        <dbReference type="Rhea" id="RHEA:18017"/>
        <dbReference type="ChEBI" id="CHEBI:15378"/>
        <dbReference type="ChEBI" id="CHEBI:16526"/>
        <dbReference type="ChEBI" id="CHEBI:17640"/>
        <dbReference type="ChEBI" id="CHEBI:18086"/>
        <dbReference type="EC" id="4.1.1.74"/>
    </reaction>
</comment>
<comment type="catalytic activity">
    <reaction evidence="7">
        <text>3-phenylpyruvate + H(+) = 2-phenylacetaldehyde + CO2</text>
        <dbReference type="Rhea" id="RHEA:14185"/>
        <dbReference type="ChEBI" id="CHEBI:15378"/>
        <dbReference type="ChEBI" id="CHEBI:16424"/>
        <dbReference type="ChEBI" id="CHEBI:16526"/>
        <dbReference type="ChEBI" id="CHEBI:18005"/>
        <dbReference type="EC" id="4.1.1.43"/>
    </reaction>
</comment>
<comment type="catalytic activity">
    <reaction evidence="12">
        <text>2-oxobutanoate + H(+) = propanal + CO2</text>
        <dbReference type="Rhea" id="RHEA:55072"/>
        <dbReference type="ChEBI" id="CHEBI:15378"/>
        <dbReference type="ChEBI" id="CHEBI:16526"/>
        <dbReference type="ChEBI" id="CHEBI:16763"/>
        <dbReference type="ChEBI" id="CHEBI:17153"/>
    </reaction>
</comment>
<comment type="catalytic activity">
    <reaction evidence="12 13">
        <text>2-oxopentanoate + H(+) = butanal + CO2</text>
        <dbReference type="Rhea" id="RHEA:50312"/>
        <dbReference type="ChEBI" id="CHEBI:15378"/>
        <dbReference type="ChEBI" id="CHEBI:15743"/>
        <dbReference type="ChEBI" id="CHEBI:16526"/>
        <dbReference type="ChEBI" id="CHEBI:28644"/>
    </reaction>
</comment>
<comment type="catalytic activity">
    <reaction evidence="6 18">
        <text>2 acetaldehyde = acetoin</text>
        <dbReference type="Rhea" id="RHEA:54364"/>
        <dbReference type="ChEBI" id="CHEBI:15343"/>
        <dbReference type="ChEBI" id="CHEBI:15688"/>
    </reaction>
</comment>
<comment type="catalytic activity">
    <reaction evidence="6 18">
        <text>acetaldehyde + pyruvate + H(+) = acetoin + CO2</text>
        <dbReference type="Rhea" id="RHEA:54368"/>
        <dbReference type="ChEBI" id="CHEBI:15343"/>
        <dbReference type="ChEBI" id="CHEBI:15361"/>
        <dbReference type="ChEBI" id="CHEBI:15378"/>
        <dbReference type="ChEBI" id="CHEBI:15688"/>
        <dbReference type="ChEBI" id="CHEBI:16526"/>
    </reaction>
</comment>
<comment type="cofactor">
    <cofactor evidence="1">
        <name>Mg(2+)</name>
        <dbReference type="ChEBI" id="CHEBI:18420"/>
    </cofactor>
    <text evidence="1">Binds 1 Mg(2+) per subunit.</text>
</comment>
<comment type="cofactor">
    <cofactor evidence="1">
        <name>thiamine diphosphate</name>
        <dbReference type="ChEBI" id="CHEBI:58937"/>
    </cofactor>
    <text evidence="1">Binds 1 thiamine pyrophosphate per subunit.</text>
</comment>
<comment type="activity regulation">
    <text evidence="1">Allosterically activated by its substrate, pyruvate.</text>
</comment>
<comment type="biophysicochemical properties">
    <kinetics>
        <KM evidence="12">5.1 mM for pyruvate</KM>
        <KM evidence="12">1.2 mM for 2-oxobutanoate</KM>
        <KM evidence="12">1.5 mM for 2-oxopentanoate</KM>
        <KM evidence="12">0.67 mM for phenylpyruvate</KM>
        <Vmax evidence="12">1.3 umol/min/mg enzyme for pyruvate</Vmax>
        <Vmax evidence="12">0.4 umol/min/mg enzyme for 2-oxobutanoate</Vmax>
        <Vmax evidence="12">0.4 umol/min/mg enzyme for 2-oxopentanoate</Vmax>
        <Vmax evidence="12">68.0 umol/min/mg enzyme for phenylpyruvate</Vmax>
        <Vmax evidence="12">46.0 umol/min/mg enzyme for 3-methyl-2-oxobutanoate</Vmax>
        <Vmax evidence="12">19.0 umol/min/mg enzyme for 4-methyl-2-oxopentanoate</Vmax>
        <Vmax evidence="12">8.0 umol/min/mg enzyme for 3-methyl-2-oxopentanoate</Vmax>
        <Vmax evidence="12">54.0 umol/min/mg enzyme for 4-methylthio-2-oxobutanoate</Vmax>
    </kinetics>
</comment>
<comment type="pathway">
    <text>Fermentation; ethanol fermentation.</text>
</comment>
<comment type="pathway">
    <text>Amino-acid degradation; Ehrlich pathway.</text>
</comment>
<comment type="subunit">
    <text>Homotetramer.</text>
</comment>
<comment type="interaction">
    <interactant intactId="EBI-5696">
        <id>P16467</id>
    </interactant>
    <interactant intactId="EBI-5687">
        <id>P06169</id>
        <label>PDC1</label>
    </interactant>
    <organismsDiffer>false</organismsDiffer>
    <experiments>2</experiments>
</comment>
<comment type="subcellular location">
    <subcellularLocation>
        <location evidence="9">Cytoplasm</location>
    </subcellularLocation>
    <subcellularLocation>
        <location evidence="9">Nucleus</location>
    </subcellularLocation>
</comment>
<comment type="induction">
    <text>Protein expression is strongly induced by high concentrations of fermentable carbon sources, under anaerobic growth conditions, and by thiamine limitation, but is repressed by the presence of PDC1 (independent of its catalytic activity) and thiamine.</text>
</comment>
<comment type="biotechnology">
    <text evidence="15">Fusel oils and acyloins are important flavor and aroma compounds in yeast-fermented products contributing to the quality of beverages and food, e.g. fusel oils in whiskey, contrary to common believe, seem to alleviate hangover. In general they are desirable at low concentrations, whereas high concentrations may spoil the product. By adjusting growth conditions and substrate their production is sought to be influenced. Due to their broad substrate tolerance pyruvate decarboxylases are important biocatalysts for chemoenzymatic syntheses, both by fermentation and in vitro, e.g. in the production of ephedrine, vitamin E, or phenylethanol (rose flavor).</text>
</comment>
<comment type="miscellaneous">
    <text evidence="10">Present with 471316 molecules/cell in log phase SD medium.</text>
</comment>
<comment type="similarity">
    <text evidence="17">Belongs to the TPP enzyme family.</text>
</comment>
<dbReference type="EC" id="4.1.1.-" evidence="11 13"/>
<dbReference type="EC" id="4.1.1.43" evidence="7"/>
<dbReference type="EC" id="4.1.1.72" evidence="5 16"/>
<dbReference type="EC" id="4.1.1.74" evidence="7"/>
<dbReference type="EMBL" id="X15668">
    <property type="protein sequence ID" value="CAA33709.1"/>
    <property type="molecule type" value="Genomic_DNA"/>
</dbReference>
<dbReference type="EMBL" id="X91258">
    <property type="protein sequence ID" value="CAA62647.1"/>
    <property type="molecule type" value="Genomic_DNA"/>
</dbReference>
<dbReference type="EMBL" id="Z73306">
    <property type="protein sequence ID" value="CAA97705.1"/>
    <property type="molecule type" value="Genomic_DNA"/>
</dbReference>
<dbReference type="EMBL" id="U53881">
    <property type="protein sequence ID" value="AAB82395.1"/>
    <property type="molecule type" value="Genomic_DNA"/>
</dbReference>
<dbReference type="EMBL" id="BK006945">
    <property type="protein sequence ID" value="DAA09445.1"/>
    <property type="molecule type" value="Genomic_DNA"/>
</dbReference>
<dbReference type="PIR" id="S59324">
    <property type="entry name" value="S59324"/>
</dbReference>
<dbReference type="RefSeq" id="NP_013235.1">
    <property type="nucleotide sequence ID" value="NM_001182021.1"/>
</dbReference>
<dbReference type="SMR" id="P16467"/>
<dbReference type="BioGRID" id="31403">
    <property type="interactions" value="62"/>
</dbReference>
<dbReference type="DIP" id="DIP-4603N"/>
<dbReference type="FunCoup" id="P16467">
    <property type="interactions" value="594"/>
</dbReference>
<dbReference type="IntAct" id="P16467">
    <property type="interactions" value="16"/>
</dbReference>
<dbReference type="MINT" id="P16467"/>
<dbReference type="STRING" id="4932.YLR134W"/>
<dbReference type="CarbonylDB" id="P16467"/>
<dbReference type="GlyGen" id="P16467">
    <property type="glycosylation" value="1 site"/>
</dbReference>
<dbReference type="iPTMnet" id="P16467"/>
<dbReference type="PaxDb" id="4932-YLR134W"/>
<dbReference type="PeptideAtlas" id="P16467"/>
<dbReference type="TopDownProteomics" id="P16467"/>
<dbReference type="EnsemblFungi" id="YLR134W_mRNA">
    <property type="protein sequence ID" value="YLR134W"/>
    <property type="gene ID" value="YLR134W"/>
</dbReference>
<dbReference type="GeneID" id="850825"/>
<dbReference type="KEGG" id="sce:YLR134W"/>
<dbReference type="AGR" id="SGD:S000004124"/>
<dbReference type="SGD" id="S000004124">
    <property type="gene designation" value="PDC5"/>
</dbReference>
<dbReference type="VEuPathDB" id="FungiDB:YLR134W"/>
<dbReference type="eggNOG" id="KOG1184">
    <property type="taxonomic scope" value="Eukaryota"/>
</dbReference>
<dbReference type="GeneTree" id="ENSGT00940000176336"/>
<dbReference type="HOGENOM" id="CLU_013748_0_2_1"/>
<dbReference type="InParanoid" id="P16467"/>
<dbReference type="OMA" id="EARFPNN"/>
<dbReference type="OrthoDB" id="3970464at2759"/>
<dbReference type="BioCyc" id="MetaCyc:YLR134W-MONOMER"/>
<dbReference type="BioCyc" id="YEAST:YLR134W-MONOMER"/>
<dbReference type="BRENDA" id="4.1.1.1">
    <property type="organism ID" value="984"/>
</dbReference>
<dbReference type="SABIO-RK" id="P16467"/>
<dbReference type="UniPathway" id="UPA00206"/>
<dbReference type="UniPathway" id="UPA00866"/>
<dbReference type="BioGRID-ORCS" id="850825">
    <property type="hits" value="6 hits in 10 CRISPR screens"/>
</dbReference>
<dbReference type="PRO" id="PR:P16467"/>
<dbReference type="Proteomes" id="UP000002311">
    <property type="component" value="Chromosome XII"/>
</dbReference>
<dbReference type="RNAct" id="P16467">
    <property type="molecule type" value="protein"/>
</dbReference>
<dbReference type="GO" id="GO:0005737">
    <property type="term" value="C:cytoplasm"/>
    <property type="evidence" value="ECO:0007005"/>
    <property type="project" value="SGD"/>
</dbReference>
<dbReference type="GO" id="GO:0005829">
    <property type="term" value="C:cytosol"/>
    <property type="evidence" value="ECO:0000318"/>
    <property type="project" value="GO_Central"/>
</dbReference>
<dbReference type="GO" id="GO:0005634">
    <property type="term" value="C:nucleus"/>
    <property type="evidence" value="ECO:0000314"/>
    <property type="project" value="SGD"/>
</dbReference>
<dbReference type="GO" id="GO:0047433">
    <property type="term" value="F:branched-chain-2-oxoacid decarboxylase activity"/>
    <property type="evidence" value="ECO:0000315"/>
    <property type="project" value="SGD"/>
</dbReference>
<dbReference type="GO" id="GO:0047434">
    <property type="term" value="F:indolepyruvate decarboxylase activity"/>
    <property type="evidence" value="ECO:0007669"/>
    <property type="project" value="UniProtKB-EC"/>
</dbReference>
<dbReference type="GO" id="GO:0000287">
    <property type="term" value="F:magnesium ion binding"/>
    <property type="evidence" value="ECO:0007669"/>
    <property type="project" value="InterPro"/>
</dbReference>
<dbReference type="GO" id="GO:0050177">
    <property type="term" value="F:phenylpyruvate decarboxylase activity"/>
    <property type="evidence" value="ECO:0007669"/>
    <property type="project" value="UniProtKB-EC"/>
</dbReference>
<dbReference type="GO" id="GO:0004737">
    <property type="term" value="F:pyruvate decarboxylase activity"/>
    <property type="evidence" value="ECO:0000314"/>
    <property type="project" value="SGD"/>
</dbReference>
<dbReference type="GO" id="GO:0030976">
    <property type="term" value="F:thiamine pyrophosphate binding"/>
    <property type="evidence" value="ECO:0007669"/>
    <property type="project" value="InterPro"/>
</dbReference>
<dbReference type="GO" id="GO:0000949">
    <property type="term" value="P:aromatic amino acid family catabolic process to alcohol via Ehrlich pathway"/>
    <property type="evidence" value="ECO:0000316"/>
    <property type="project" value="SGD"/>
</dbReference>
<dbReference type="GO" id="GO:0009083">
    <property type="term" value="P:branched-chain amino acid catabolic process"/>
    <property type="evidence" value="ECO:0007669"/>
    <property type="project" value="UniProtKB-KW"/>
</dbReference>
<dbReference type="GO" id="GO:0019655">
    <property type="term" value="P:glycolytic fermentation to ethanol"/>
    <property type="evidence" value="ECO:0000314"/>
    <property type="project" value="SGD"/>
</dbReference>
<dbReference type="GO" id="GO:0006559">
    <property type="term" value="P:L-phenylalanine catabolic process"/>
    <property type="evidence" value="ECO:0000316"/>
    <property type="project" value="SGD"/>
</dbReference>
<dbReference type="GO" id="GO:0006569">
    <property type="term" value="P:L-tryptophan catabolic process"/>
    <property type="evidence" value="ECO:0000316"/>
    <property type="project" value="SGD"/>
</dbReference>
<dbReference type="CDD" id="cd02005">
    <property type="entry name" value="TPP_PDC_IPDC"/>
    <property type="match status" value="1"/>
</dbReference>
<dbReference type="CDD" id="cd07038">
    <property type="entry name" value="TPP_PYR_PDC_IPDC_like"/>
    <property type="match status" value="1"/>
</dbReference>
<dbReference type="FunFam" id="3.40.50.1220:FF:000018">
    <property type="entry name" value="Pyruvate decarboxylase isozyme"/>
    <property type="match status" value="1"/>
</dbReference>
<dbReference type="FunFam" id="3.40.50.970:FF:000019">
    <property type="entry name" value="Pyruvate decarboxylase isozyme"/>
    <property type="match status" value="1"/>
</dbReference>
<dbReference type="FunFam" id="3.40.50.970:FF:000024">
    <property type="entry name" value="Pyruvate decarboxylase isozyme"/>
    <property type="match status" value="1"/>
</dbReference>
<dbReference type="Gene3D" id="3.40.50.970">
    <property type="match status" value="2"/>
</dbReference>
<dbReference type="Gene3D" id="3.40.50.1220">
    <property type="entry name" value="TPP-binding domain"/>
    <property type="match status" value="1"/>
</dbReference>
<dbReference type="InterPro" id="IPR029035">
    <property type="entry name" value="DHS-like_NAD/FAD-binding_dom"/>
</dbReference>
<dbReference type="InterPro" id="IPR012110">
    <property type="entry name" value="PDC/IPDC-like"/>
</dbReference>
<dbReference type="InterPro" id="IPR029061">
    <property type="entry name" value="THDP-binding"/>
</dbReference>
<dbReference type="InterPro" id="IPR012000">
    <property type="entry name" value="Thiamin_PyroP_enz_cen_dom"/>
</dbReference>
<dbReference type="InterPro" id="IPR012001">
    <property type="entry name" value="Thiamin_PyroP_enz_TPP-bd_dom"/>
</dbReference>
<dbReference type="InterPro" id="IPR000399">
    <property type="entry name" value="TPP-bd_CS"/>
</dbReference>
<dbReference type="InterPro" id="IPR011766">
    <property type="entry name" value="TPP_enzyme_TPP-bd"/>
</dbReference>
<dbReference type="InterPro" id="IPR047214">
    <property type="entry name" value="TPP_PDC_IPDC"/>
</dbReference>
<dbReference type="InterPro" id="IPR047213">
    <property type="entry name" value="TPP_PYR_PDC_IPDC-like"/>
</dbReference>
<dbReference type="PANTHER" id="PTHR43452">
    <property type="entry name" value="PYRUVATE DECARBOXYLASE"/>
    <property type="match status" value="1"/>
</dbReference>
<dbReference type="PANTHER" id="PTHR43452:SF30">
    <property type="entry name" value="PYRUVATE DECARBOXYLASE ISOZYME 1-RELATED"/>
    <property type="match status" value="1"/>
</dbReference>
<dbReference type="Pfam" id="PF02775">
    <property type="entry name" value="TPP_enzyme_C"/>
    <property type="match status" value="1"/>
</dbReference>
<dbReference type="Pfam" id="PF00205">
    <property type="entry name" value="TPP_enzyme_M"/>
    <property type="match status" value="1"/>
</dbReference>
<dbReference type="Pfam" id="PF02776">
    <property type="entry name" value="TPP_enzyme_N"/>
    <property type="match status" value="1"/>
</dbReference>
<dbReference type="PIRSF" id="PIRSF036565">
    <property type="entry name" value="Pyruvt_ip_decrb"/>
    <property type="match status" value="1"/>
</dbReference>
<dbReference type="SUPFAM" id="SSF52467">
    <property type="entry name" value="DHS-like NAD/FAD-binding domain"/>
    <property type="match status" value="1"/>
</dbReference>
<dbReference type="SUPFAM" id="SSF52518">
    <property type="entry name" value="Thiamin diphosphate-binding fold (THDP-binding)"/>
    <property type="match status" value="2"/>
</dbReference>
<dbReference type="PROSITE" id="PS00187">
    <property type="entry name" value="TPP_ENZYMES"/>
    <property type="match status" value="1"/>
</dbReference>
<feature type="chain" id="PRO_0000090771" description="Pyruvate decarboxylase isozyme 2">
    <location>
        <begin position="1"/>
        <end position="563"/>
    </location>
</feature>
<feature type="binding site" evidence="1">
    <location>
        <position position="28"/>
    </location>
    <ligand>
        <name>pyruvate</name>
        <dbReference type="ChEBI" id="CHEBI:15361"/>
        <label>1</label>
        <note>substrate; ligand shared between two neighboring subunits</note>
    </ligand>
</feature>
<feature type="binding site" evidence="1">
    <location>
        <position position="115"/>
    </location>
    <ligand>
        <name>pyruvate</name>
        <dbReference type="ChEBI" id="CHEBI:15361"/>
        <label>1</label>
        <note>substrate; ligand shared between two neighboring subunits</note>
    </ligand>
</feature>
<feature type="binding site" evidence="1">
    <location>
        <position position="157"/>
    </location>
    <ligand>
        <name>pyruvate</name>
        <dbReference type="ChEBI" id="CHEBI:15361"/>
        <label>2</label>
        <note>allosteric activator</note>
    </ligand>
</feature>
<feature type="binding site" evidence="1">
    <location>
        <position position="224"/>
    </location>
    <ligand>
        <name>pyruvate</name>
        <dbReference type="ChEBI" id="CHEBI:15361"/>
        <label>2</label>
        <note>allosteric activator</note>
    </ligand>
</feature>
<feature type="binding site" evidence="1">
    <location>
        <position position="390"/>
    </location>
    <ligand>
        <name>thiamine diphosphate</name>
        <dbReference type="ChEBI" id="CHEBI:58937"/>
    </ligand>
</feature>
<feature type="binding site" evidence="1">
    <location>
        <begin position="413"/>
        <end position="415"/>
    </location>
    <ligand>
        <name>thiamine diphosphate</name>
        <dbReference type="ChEBI" id="CHEBI:58937"/>
    </ligand>
</feature>
<feature type="binding site" evidence="1">
    <location>
        <position position="444"/>
    </location>
    <ligand>
        <name>Mg(2+)</name>
        <dbReference type="ChEBI" id="CHEBI:18420"/>
    </ligand>
</feature>
<feature type="binding site" evidence="1">
    <location>
        <begin position="445"/>
        <end position="446"/>
    </location>
    <ligand>
        <name>thiamine diphosphate</name>
        <dbReference type="ChEBI" id="CHEBI:58937"/>
    </ligand>
</feature>
<feature type="binding site" evidence="1">
    <location>
        <begin position="471"/>
        <end position="476"/>
    </location>
    <ligand>
        <name>thiamine diphosphate</name>
        <dbReference type="ChEBI" id="CHEBI:58937"/>
    </ligand>
</feature>
<feature type="binding site" evidence="1">
    <location>
        <position position="471"/>
    </location>
    <ligand>
        <name>Mg(2+)</name>
        <dbReference type="ChEBI" id="CHEBI:18420"/>
    </ligand>
</feature>
<feature type="binding site" evidence="1">
    <location>
        <position position="473"/>
    </location>
    <ligand>
        <name>Mg(2+)</name>
        <dbReference type="ChEBI" id="CHEBI:18420"/>
    </ligand>
</feature>
<feature type="binding site" evidence="1">
    <location>
        <position position="477"/>
    </location>
    <ligand>
        <name>pyruvate</name>
        <dbReference type="ChEBI" id="CHEBI:15361"/>
        <label>1</label>
        <note>substrate; ligand shared between two neighboring subunits</note>
    </ligand>
</feature>
<feature type="sequence conflict" description="In Ref. 1; CAA33709." evidence="17" ref="1">
    <original>D</original>
    <variation>N</variation>
    <location>
        <position position="35"/>
    </location>
</feature>
<feature type="sequence conflict" description="In Ref. 1; CAA33709." evidence="17" ref="1">
    <original>A</original>
    <variation>R</variation>
    <location>
        <position position="143"/>
    </location>
</feature>
<feature type="sequence conflict" description="In Ref. 1; CAA33709." evidence="17" ref="1">
    <original>L</original>
    <variation>F</variation>
    <location>
        <position position="207"/>
    </location>
</feature>
<feature type="sequence conflict" description="In Ref. 1; CAA33709." evidence="17" ref="1">
    <original>A</original>
    <variation>C</variation>
    <location>
        <position position="222"/>
    </location>
</feature>
<feature type="sequence conflict" description="In Ref. 1; CAA33709." evidence="17" ref="1">
    <original>V</original>
    <variation>A</variation>
    <location>
        <position position="341"/>
    </location>
</feature>
<feature type="sequence conflict" description="In Ref. 1; CAA33709." evidence="17" ref="1">
    <original>H</original>
    <variation>Q</variation>
    <location>
        <position position="373"/>
    </location>
</feature>
<gene>
    <name type="primary">PDC5</name>
    <name type="ordered locus">YLR134W</name>
    <name type="ORF">L3133</name>
    <name type="ORF">L9606.7</name>
</gene>
<sequence length="563" mass="61912">MSEITLGKYLFERLSQVNCNTVFGLPGDFNLSLLDKLYEVKGMRWAGNANELNAAYAADGYARIKGMSCIITTFGVGELSALNGIAGSYAEHVGVLHVVGVPSISSQAKQLLLHHTLGNGDFTVFHRMSANISETTAMITDIANAPAEIDRCIRTTYTTQRPVYLGLPANLVDLNVPAKLLETPIDLSLKPNDAEAEAEVVRTVVELIKDAKNPVILADACASRHDVKAETKKLMDLTQFPVYVTPMGKGAIDEQHPRYGGVYVGTLSRPEVKKAVESADLILSIGALLSDFNTGSFSYSYKTKNIVEFHSDHIKIRNATFPGVQMKFALQKLLDAIPEVVKDYKPVAVPARVPITKSTPANTPMKQEWMWNHLGNFLREGDIVIAETGTSAFGINQTTFPTDVYAIVQVLWGSIGFTVGALLGATMAAEELDPKKRVILFIGDGSLQLTVQEISTMIRWGLKPYIFVLNNNGYTIEKLIHGPHAEYNEIQGWDHLALLPTFGARNYETHRVATTGEWEKLTQDKDFQDNSKIRMIEVMLPVFDAPQNLVKQAQLTAATNAKQ</sequence>
<reference key="1">
    <citation type="journal article" date="1990" name="Eur. J. Biochem.">
        <title>Autoregulation may control the expression of yeast pyruvate decarboxylase structural genes PDC1 and PDC5.</title>
        <authorList>
            <person name="Hohmann S."/>
            <person name="Cederberg H."/>
        </authorList>
    </citation>
    <scope>NUCLEOTIDE SEQUENCE [GENOMIC DNA]</scope>
</reference>
<reference key="2">
    <citation type="journal article" date="1997" name="Nature">
        <title>The nucleotide sequence of Saccharomyces cerevisiae chromosome XII.</title>
        <authorList>
            <person name="Johnston M."/>
            <person name="Hillier L.W."/>
            <person name="Riles L."/>
            <person name="Albermann K."/>
            <person name="Andre B."/>
            <person name="Ansorge W."/>
            <person name="Benes V."/>
            <person name="Brueckner M."/>
            <person name="Delius H."/>
            <person name="Dubois E."/>
            <person name="Duesterhoeft A."/>
            <person name="Entian K.-D."/>
            <person name="Floeth M."/>
            <person name="Goffeau A."/>
            <person name="Hebling U."/>
            <person name="Heumann K."/>
            <person name="Heuss-Neitzel D."/>
            <person name="Hilbert H."/>
            <person name="Hilger F."/>
            <person name="Kleine K."/>
            <person name="Koetter P."/>
            <person name="Louis E.J."/>
            <person name="Messenguy F."/>
            <person name="Mewes H.-W."/>
            <person name="Miosga T."/>
            <person name="Moestl D."/>
            <person name="Mueller-Auer S."/>
            <person name="Nentwich U."/>
            <person name="Obermaier B."/>
            <person name="Piravandi E."/>
            <person name="Pohl T.M."/>
            <person name="Portetelle D."/>
            <person name="Purnelle B."/>
            <person name="Rechmann S."/>
            <person name="Rieger M."/>
            <person name="Rinke M."/>
            <person name="Rose M."/>
            <person name="Scharfe M."/>
            <person name="Scherens B."/>
            <person name="Scholler P."/>
            <person name="Schwager C."/>
            <person name="Schwarz S."/>
            <person name="Underwood A.P."/>
            <person name="Urrestarazu L.A."/>
            <person name="Vandenbol M."/>
            <person name="Verhasselt P."/>
            <person name="Vierendeels F."/>
            <person name="Voet M."/>
            <person name="Volckaert G."/>
            <person name="Voss H."/>
            <person name="Wambutt R."/>
            <person name="Wedler E."/>
            <person name="Wedler H."/>
            <person name="Zimmermann F.K."/>
            <person name="Zollner A."/>
            <person name="Hani J."/>
            <person name="Hoheisel J.D."/>
        </authorList>
    </citation>
    <scope>NUCLEOTIDE SEQUENCE [LARGE SCALE GENOMIC DNA]</scope>
    <source>
        <strain>ATCC 204508 / S288c</strain>
    </source>
</reference>
<reference key="3">
    <citation type="journal article" date="2014" name="G3 (Bethesda)">
        <title>The reference genome sequence of Saccharomyces cerevisiae: Then and now.</title>
        <authorList>
            <person name="Engel S.R."/>
            <person name="Dietrich F.S."/>
            <person name="Fisk D.G."/>
            <person name="Binkley G."/>
            <person name="Balakrishnan R."/>
            <person name="Costanzo M.C."/>
            <person name="Dwight S.S."/>
            <person name="Hitz B.C."/>
            <person name="Karra K."/>
            <person name="Nash R.S."/>
            <person name="Weng S."/>
            <person name="Wong E.D."/>
            <person name="Lloyd P."/>
            <person name="Skrzypek M.S."/>
            <person name="Miyasato S.R."/>
            <person name="Simison M."/>
            <person name="Cherry J.M."/>
        </authorList>
    </citation>
    <scope>GENOME REANNOTATION</scope>
    <source>
        <strain>ATCC 204508 / S288c</strain>
    </source>
</reference>
<reference key="4">
    <citation type="journal article" date="1984" name="Biochemistry">
        <title>Brewers' yeast pyruvate decarboxylase produces acetoin from acetaldehyde: a novel tool to study the mechanism of steps subsequent to carbon dioxide loss.</title>
        <authorList>
            <person name="Chen G.C."/>
            <person name="Jordan F."/>
        </authorList>
    </citation>
    <scope>FUNCTION</scope>
</reference>
<reference key="5">
    <citation type="journal article" date="1997" name="J. Biol. Chem.">
        <title>A 13C nuclear magnetic resonance investigation of the metabolism of leucine to isoamyl alcohol in Saccharomyces cerevisiae.</title>
        <authorList>
            <person name="Dickinson J.R."/>
            <person name="Lanterman M.M."/>
            <person name="Danner D.J."/>
            <person name="Pearson B.M."/>
            <person name="Sanz P."/>
            <person name="Harrison S.J."/>
            <person name="Hewlins M.J."/>
        </authorList>
    </citation>
    <scope>ROLE IN AMINO ACID CATABOLISM</scope>
</reference>
<reference key="6">
    <citation type="journal article" date="1998" name="Biochim. Biophys. Acta">
        <title>Application of alpha-keto acid decarboxylases in biotransformations.</title>
        <authorList>
            <person name="Iding H."/>
            <person name="Siegert P."/>
            <person name="Mesch K."/>
            <person name="Pohl M."/>
        </authorList>
    </citation>
    <scope>REVIEW</scope>
    <scope>BIOTECHNOLOGICAL RELEVANCE</scope>
</reference>
<reference key="7">
    <citation type="journal article" date="1998" name="Biochim. Biophys. Acta">
        <title>Thiamin metabolism and thiamin diphosphate-dependent enzymes in the yeast Saccharomyces cerevisiae: genetic regulation.</title>
        <authorList>
            <person name="Hohmann S."/>
            <person name="Meacock P.A."/>
        </authorList>
    </citation>
    <scope>REVIEW</scope>
</reference>
<reference key="8">
    <citation type="journal article" date="1998" name="J. Biol. Chem.">
        <title>An investigation of the metabolism of valine to isobutyl alcohol in Saccharomyces cerevisiae.</title>
        <authorList>
            <person name="Dickinson J.R."/>
            <person name="Harrison S.J."/>
            <person name="Hewlins M.J."/>
        </authorList>
    </citation>
    <scope>ROLE IN VALINE CATABOLISM</scope>
</reference>
<reference key="9">
    <citation type="journal article" date="1999" name="Eur. J. Biochem.">
        <title>Autoregulation of yeast pyruvate decarboxylase gene expression requires the enzyme but not its catalytic activity.</title>
        <authorList>
            <person name="Eberhardt I."/>
            <person name="Cederberg H."/>
            <person name="Li H."/>
            <person name="Konig S."/>
            <person name="Jordan F."/>
            <person name="Hohmann S."/>
        </authorList>
    </citation>
    <scope>FUNCTION</scope>
    <scope>CONTROL OF PDC5 EXPRESSION BY PDC1</scope>
</reference>
<reference key="10">
    <citation type="journal article" date="1999" name="FEBS Lett.">
        <title>Thiamine repression and pyruvate decarboxylase autoregulation independently control the expression of the Saccharomyces cerevisiae PDC5 gene.</title>
        <authorList>
            <person name="Muller E.H."/>
            <person name="Richards E.J."/>
            <person name="Norbeck J."/>
            <person name="Byrne K.L."/>
            <person name="Karlsson K.A."/>
            <person name="Pretorius G.H."/>
            <person name="Meacock P.A."/>
            <person name="Blomberg A."/>
            <person name="Hohmann S."/>
        </authorList>
    </citation>
    <scope>FUNCTION</scope>
    <scope>CONTROL OF PDC5 EXPRESSION BY THIAMINE</scope>
</reference>
<reference key="11">
    <citation type="journal article" date="1999" name="FEMS Microbiol. Lett.">
        <title>Growth requirements of pyruvate-decarboxylase-negative Saccharomyces cerevisiae.</title>
        <authorList>
            <person name="Flikweert M.T."/>
            <person name="de Swaaf M."/>
            <person name="van Dijken J.P."/>
            <person name="Pronk J.T."/>
        </authorList>
    </citation>
    <scope>FUNCTION</scope>
    <scope>CYTOSOLIC ACETYL-COA PRODUCTION</scope>
</reference>
<reference key="12">
    <citation type="journal article" date="2000" name="J. Agric. Food Chem.">
        <title>Generation of odorous acyloins by yeast pyruvate decarboxylases and their occurrence in sherry and soy sauce.</title>
        <authorList>
            <person name="Neuser F."/>
            <person name="Zorn H."/>
            <person name="Berger R.G."/>
        </authorList>
    </citation>
    <scope>FUNCTION</scope>
    <scope>GENERATION OF ACYLOINS</scope>
</reference>
<reference key="13">
    <citation type="journal article" date="2000" name="J. Biol. Chem.">
        <title>An investigation of the metabolism of isoleucine to active Amyl alcohol in Saccharomyces cerevisiae.</title>
        <authorList>
            <person name="Dickinson J.R."/>
            <person name="Harrison S.J."/>
            <person name="Dickinson J.A."/>
            <person name="Hewlins M.J."/>
        </authorList>
    </citation>
    <scope>ROLE IN ISOLEUCINE CATABOLISM</scope>
</reference>
<reference key="14">
    <citation type="journal article" date="2003" name="Appl. Environ. Microbiol.">
        <title>Identification and characterization of phenylpyruvate decarboxylase genes in Saccharomyces cerevisiae.</title>
        <authorList>
            <person name="Vuralhan Z."/>
            <person name="Morais M.A."/>
            <person name="Tai S.L."/>
            <person name="Piper M.D."/>
            <person name="Pronk J.T."/>
        </authorList>
    </citation>
    <scope>FUNCTION</scope>
    <scope>AROMATIC AMINO ACIDS AS NITROGEN SOURCE</scope>
</reference>
<reference key="15">
    <citation type="journal article" date="2003" name="J. Biol. Chem.">
        <title>The catabolism of amino acids to long chain and complex alcohols in Saccharomyces cerevisiae.</title>
        <authorList>
            <person name="Dickinson J.R."/>
            <person name="Salgado L.E."/>
            <person name="Hewlins M.J."/>
        </authorList>
    </citation>
    <scope>ROLE IN PHENYLALANINE; TRYPTOPHAN AND LEUCINE CATABOLISM</scope>
</reference>
<reference key="16">
    <citation type="journal article" date="2003" name="Nature">
        <title>Global analysis of protein localization in budding yeast.</title>
        <authorList>
            <person name="Huh W.-K."/>
            <person name="Falvo J.V."/>
            <person name="Gerke L.C."/>
            <person name="Carroll A.S."/>
            <person name="Howson R.W."/>
            <person name="Weissman J.S."/>
            <person name="O'Shea E.K."/>
        </authorList>
    </citation>
    <scope>SUBCELLULAR LOCATION [LARGE SCALE ANALYSIS]</scope>
</reference>
<reference key="17">
    <citation type="journal article" date="2003" name="Nature">
        <title>Global analysis of protein expression in yeast.</title>
        <authorList>
            <person name="Ghaemmaghami S."/>
            <person name="Huh W.-K."/>
            <person name="Bower K."/>
            <person name="Howson R.W."/>
            <person name="Belle A."/>
            <person name="Dephoure N."/>
            <person name="O'Shea E.K."/>
            <person name="Weissman J.S."/>
        </authorList>
    </citation>
    <scope>LEVEL OF PROTEIN EXPRESSION [LARGE SCALE ANALYSIS]</scope>
</reference>
<reference key="18">
    <citation type="journal article" date="2012" name="Appl. Environ. Microbiol.">
        <title>Substrate specificity of thiamine pyrophosphate-dependent 2-oxo-acid decarboxylases in Saccharomyces cerevisiae.</title>
        <authorList>
            <person name="Romagnoli G."/>
            <person name="Luttik M.A."/>
            <person name="Koetter P."/>
            <person name="Pronk J.T."/>
            <person name="Daran J.M."/>
        </authorList>
    </citation>
    <scope>CATALYTIC ACTIVITY</scope>
    <scope>BIOPHYSICOCHEMICAL PROPERTIES</scope>
</reference>
<reference key="19">
    <citation type="journal article" date="2013" name="Biotechnol. Biofuels">
        <title>A novel pathway to produce butanol and isobutanol in Saccharomyces cerevisiae.</title>
        <authorList>
            <person name="Branduardi P."/>
            <person name="Longo V."/>
            <person name="Berterame N.M."/>
            <person name="Rossi G."/>
            <person name="Porro D."/>
        </authorList>
    </citation>
    <scope>FUNCTION IN BUTANOL PRODUCTION</scope>
</reference>